<reference key="1">
    <citation type="journal article" date="2011" name="J. Bacteriol.">
        <title>Complete genome sequence of the Thermophilic Bacterium Exiguobacterium sp. AT1b.</title>
        <authorList>
            <person name="Vishnivetskaya T.A."/>
            <person name="Lucas S."/>
            <person name="Copeland A."/>
            <person name="Lapidus A."/>
            <person name="Glavina del Rio T."/>
            <person name="Dalin E."/>
            <person name="Tice H."/>
            <person name="Bruce D.C."/>
            <person name="Goodwin L.A."/>
            <person name="Pitluck S."/>
            <person name="Saunders E."/>
            <person name="Brettin T."/>
            <person name="Detter C."/>
            <person name="Han C."/>
            <person name="Larimer F."/>
            <person name="Land M.L."/>
            <person name="Hauser L.J."/>
            <person name="Kyrpides N.C."/>
            <person name="Ovchinnikova G."/>
            <person name="Kathariou S."/>
            <person name="Ramaley R.F."/>
            <person name="Rodrigues D.F."/>
            <person name="Hendrix C."/>
            <person name="Richardson P."/>
            <person name="Tiedje J.M."/>
        </authorList>
    </citation>
    <scope>NUCLEOTIDE SEQUENCE [LARGE SCALE GENOMIC DNA]</scope>
    <source>
        <strain>ATCC BAA-1283 / AT1b</strain>
    </source>
</reference>
<accession>C4KZN7</accession>
<gene>
    <name evidence="1" type="primary">rpsQ</name>
    <name type="ordered locus">EAT1b_1624</name>
</gene>
<keyword id="KW-0687">Ribonucleoprotein</keyword>
<keyword id="KW-0689">Ribosomal protein</keyword>
<keyword id="KW-0694">RNA-binding</keyword>
<keyword id="KW-0699">rRNA-binding</keyword>
<evidence type="ECO:0000255" key="1">
    <source>
        <dbReference type="HAMAP-Rule" id="MF_01345"/>
    </source>
</evidence>
<evidence type="ECO:0000305" key="2"/>
<sequence length="86" mass="10016">MERNNRKVFTGRVVSDKMDKTIVVAVETKVRHKLYGKRVNYTKKYKAHDENNVAKVGDIVRIAETRPLSKDKRFRLVTVVEESVII</sequence>
<organism>
    <name type="scientific">Exiguobacterium sp. (strain ATCC BAA-1283 / AT1b)</name>
    <dbReference type="NCBI Taxonomy" id="360911"/>
    <lineage>
        <taxon>Bacteria</taxon>
        <taxon>Bacillati</taxon>
        <taxon>Bacillota</taxon>
        <taxon>Bacilli</taxon>
        <taxon>Bacillales</taxon>
        <taxon>Bacillales Family XII. Incertae Sedis</taxon>
        <taxon>Exiguobacterium</taxon>
    </lineage>
</organism>
<comment type="function">
    <text evidence="1">One of the primary rRNA binding proteins, it binds specifically to the 5'-end of 16S ribosomal RNA.</text>
</comment>
<comment type="subunit">
    <text evidence="1">Part of the 30S ribosomal subunit.</text>
</comment>
<comment type="similarity">
    <text evidence="1">Belongs to the universal ribosomal protein uS17 family.</text>
</comment>
<proteinExistence type="inferred from homology"/>
<name>RS17_EXISA</name>
<protein>
    <recommendedName>
        <fullName evidence="1">Small ribosomal subunit protein uS17</fullName>
    </recommendedName>
    <alternativeName>
        <fullName evidence="2">30S ribosomal protein S17</fullName>
    </alternativeName>
</protein>
<feature type="chain" id="PRO_1000214784" description="Small ribosomal subunit protein uS17">
    <location>
        <begin position="1"/>
        <end position="86"/>
    </location>
</feature>
<dbReference type="EMBL" id="CP001615">
    <property type="protein sequence ID" value="ACQ70550.1"/>
    <property type="molecule type" value="Genomic_DNA"/>
</dbReference>
<dbReference type="RefSeq" id="WP_012727668.1">
    <property type="nucleotide sequence ID" value="NZ_MOEL01000001.1"/>
</dbReference>
<dbReference type="SMR" id="C4KZN7"/>
<dbReference type="STRING" id="360911.EAT1b_1624"/>
<dbReference type="GeneID" id="94370752"/>
<dbReference type="KEGG" id="eat:EAT1b_1624"/>
<dbReference type="eggNOG" id="COG0186">
    <property type="taxonomic scope" value="Bacteria"/>
</dbReference>
<dbReference type="HOGENOM" id="CLU_073626_1_0_9"/>
<dbReference type="OrthoDB" id="9811714at2"/>
<dbReference type="Proteomes" id="UP000000716">
    <property type="component" value="Chromosome"/>
</dbReference>
<dbReference type="GO" id="GO:0022627">
    <property type="term" value="C:cytosolic small ribosomal subunit"/>
    <property type="evidence" value="ECO:0007669"/>
    <property type="project" value="TreeGrafter"/>
</dbReference>
<dbReference type="GO" id="GO:0019843">
    <property type="term" value="F:rRNA binding"/>
    <property type="evidence" value="ECO:0007669"/>
    <property type="project" value="UniProtKB-UniRule"/>
</dbReference>
<dbReference type="GO" id="GO:0003735">
    <property type="term" value="F:structural constituent of ribosome"/>
    <property type="evidence" value="ECO:0007669"/>
    <property type="project" value="InterPro"/>
</dbReference>
<dbReference type="GO" id="GO:0006412">
    <property type="term" value="P:translation"/>
    <property type="evidence" value="ECO:0007669"/>
    <property type="project" value="UniProtKB-UniRule"/>
</dbReference>
<dbReference type="CDD" id="cd00364">
    <property type="entry name" value="Ribosomal_uS17"/>
    <property type="match status" value="1"/>
</dbReference>
<dbReference type="FunFam" id="2.40.50.140:FF:000026">
    <property type="entry name" value="30S ribosomal protein S17"/>
    <property type="match status" value="1"/>
</dbReference>
<dbReference type="Gene3D" id="2.40.50.140">
    <property type="entry name" value="Nucleic acid-binding proteins"/>
    <property type="match status" value="1"/>
</dbReference>
<dbReference type="HAMAP" id="MF_01345_B">
    <property type="entry name" value="Ribosomal_uS17_B"/>
    <property type="match status" value="1"/>
</dbReference>
<dbReference type="InterPro" id="IPR012340">
    <property type="entry name" value="NA-bd_OB-fold"/>
</dbReference>
<dbReference type="InterPro" id="IPR000266">
    <property type="entry name" value="Ribosomal_uS17"/>
</dbReference>
<dbReference type="InterPro" id="IPR019984">
    <property type="entry name" value="Ribosomal_uS17_bact/chlr"/>
</dbReference>
<dbReference type="InterPro" id="IPR019979">
    <property type="entry name" value="Ribosomal_uS17_CS"/>
</dbReference>
<dbReference type="NCBIfam" id="NF004123">
    <property type="entry name" value="PRK05610.1"/>
    <property type="match status" value="1"/>
</dbReference>
<dbReference type="NCBIfam" id="TIGR03635">
    <property type="entry name" value="uS17_bact"/>
    <property type="match status" value="1"/>
</dbReference>
<dbReference type="PANTHER" id="PTHR10744">
    <property type="entry name" value="40S RIBOSOMAL PROTEIN S11 FAMILY MEMBER"/>
    <property type="match status" value="1"/>
</dbReference>
<dbReference type="PANTHER" id="PTHR10744:SF1">
    <property type="entry name" value="SMALL RIBOSOMAL SUBUNIT PROTEIN US17M"/>
    <property type="match status" value="1"/>
</dbReference>
<dbReference type="Pfam" id="PF00366">
    <property type="entry name" value="Ribosomal_S17"/>
    <property type="match status" value="1"/>
</dbReference>
<dbReference type="PRINTS" id="PR00973">
    <property type="entry name" value="RIBOSOMALS17"/>
</dbReference>
<dbReference type="SUPFAM" id="SSF50249">
    <property type="entry name" value="Nucleic acid-binding proteins"/>
    <property type="match status" value="1"/>
</dbReference>
<dbReference type="PROSITE" id="PS00056">
    <property type="entry name" value="RIBOSOMAL_S17"/>
    <property type="match status" value="1"/>
</dbReference>